<feature type="signal peptide" evidence="4">
    <location>
        <begin position="1"/>
        <end position="30"/>
    </location>
</feature>
<feature type="chain" id="PRO_0000011800" description="Xyloglucan endotransglucosylase/hydrolase 2" evidence="10">
    <location>
        <begin position="31"/>
        <end position="283"/>
    </location>
</feature>
<feature type="domain" description="GH16" evidence="6">
    <location>
        <begin position="31"/>
        <end position="220"/>
    </location>
</feature>
<feature type="active site" description="Nucleophile" evidence="7">
    <location>
        <position position="106"/>
    </location>
</feature>
<feature type="active site" description="Proton donor" evidence="7">
    <location>
        <position position="110"/>
    </location>
</feature>
<feature type="binding site" evidence="2">
    <location>
        <position position="110"/>
    </location>
    <ligand>
        <name>xyloglucan</name>
        <dbReference type="ChEBI" id="CHEBI:18233"/>
    </ligand>
</feature>
<feature type="binding site" evidence="2">
    <location>
        <begin position="123"/>
        <end position="125"/>
    </location>
    <ligand>
        <name>xyloglucan</name>
        <dbReference type="ChEBI" id="CHEBI:18233"/>
    </ligand>
</feature>
<feature type="binding site" evidence="2">
    <location>
        <begin position="133"/>
        <end position="135"/>
    </location>
    <ligand>
        <name>xyloglucan</name>
        <dbReference type="ChEBI" id="CHEBI:18233"/>
    </ligand>
</feature>
<feature type="binding site" evidence="2">
    <location>
        <begin position="199"/>
        <end position="200"/>
    </location>
    <ligand>
        <name>xyloglucan</name>
        <dbReference type="ChEBI" id="CHEBI:18233"/>
    </ligand>
</feature>
<feature type="binding site" evidence="2">
    <location>
        <position position="204"/>
    </location>
    <ligand>
        <name>xyloglucan</name>
        <dbReference type="ChEBI" id="CHEBI:18233"/>
    </ligand>
</feature>
<feature type="binding site" evidence="2">
    <location>
        <position position="272"/>
    </location>
    <ligand>
        <name>xyloglucan</name>
        <dbReference type="ChEBI" id="CHEBI:18233"/>
    </ligand>
</feature>
<feature type="site" description="Important for catalytic activity" evidence="2">
    <location>
        <position position="108"/>
    </location>
</feature>
<feature type="glycosylation site" description="N-linked (GlcNAc...) asparagine" evidence="5">
    <location>
        <position position="114"/>
    </location>
</feature>
<feature type="disulfide bond" evidence="2">
    <location>
        <begin position="267"/>
        <end position="281"/>
    </location>
</feature>
<keyword id="KW-0052">Apoplast</keyword>
<keyword id="KW-0134">Cell wall</keyword>
<keyword id="KW-1015">Disulfide bond</keyword>
<keyword id="KW-0325">Glycoprotein</keyword>
<keyword id="KW-0326">Glycosidase</keyword>
<keyword id="KW-0378">Hydrolase</keyword>
<keyword id="KW-1185">Reference proteome</keyword>
<keyword id="KW-0964">Secreted</keyword>
<keyword id="KW-0732">Signal</keyword>
<keyword id="KW-0808">Transferase</keyword>
<evidence type="ECO:0000250" key="1">
    <source>
        <dbReference type="UniProtKB" id="Q38857"/>
    </source>
</evidence>
<evidence type="ECO:0000250" key="2">
    <source>
        <dbReference type="UniProtKB" id="Q8GZD5"/>
    </source>
</evidence>
<evidence type="ECO:0000250" key="3">
    <source>
        <dbReference type="UniProtKB" id="Q9ZSU4"/>
    </source>
</evidence>
<evidence type="ECO:0000255" key="4"/>
<evidence type="ECO:0000255" key="5">
    <source>
        <dbReference type="PROSITE-ProRule" id="PRU00498"/>
    </source>
</evidence>
<evidence type="ECO:0000255" key="6">
    <source>
        <dbReference type="PROSITE-ProRule" id="PRU01098"/>
    </source>
</evidence>
<evidence type="ECO:0000255" key="7">
    <source>
        <dbReference type="PROSITE-ProRule" id="PRU10064"/>
    </source>
</evidence>
<evidence type="ECO:0000269" key="8">
    <source>
    </source>
</evidence>
<evidence type="ECO:0000303" key="9">
    <source>
    </source>
</evidence>
<evidence type="ECO:0000305" key="10"/>
<dbReference type="EC" id="2.4.1.207" evidence="1"/>
<dbReference type="EMBL" id="L22162">
    <property type="protein sequence ID" value="AAA81350.1"/>
    <property type="molecule type" value="mRNA"/>
</dbReference>
<dbReference type="EMBL" id="BT096944">
    <property type="protein sequence ID" value="ACU21133.1"/>
    <property type="molecule type" value="mRNA"/>
</dbReference>
<dbReference type="PIR" id="T07678">
    <property type="entry name" value="T07678"/>
</dbReference>
<dbReference type="RefSeq" id="NP_001238152.1">
    <property type="nucleotide sequence ID" value="NM_001251223.2"/>
</dbReference>
<dbReference type="SMR" id="P35694"/>
<dbReference type="FunCoup" id="P35694">
    <property type="interactions" value="148"/>
</dbReference>
<dbReference type="STRING" id="3847.P35694"/>
<dbReference type="CAZy" id="GH16">
    <property type="family name" value="Glycoside Hydrolase Family 16"/>
</dbReference>
<dbReference type="PaxDb" id="3847-GLYMA08G11300.2"/>
<dbReference type="EnsemblPlants" id="KRH42721">
    <property type="protein sequence ID" value="KRH42721"/>
    <property type="gene ID" value="GLYMA_08G107300"/>
</dbReference>
<dbReference type="GeneID" id="547802"/>
<dbReference type="Gramene" id="KRH42721">
    <property type="protein sequence ID" value="KRH42721"/>
    <property type="gene ID" value="GLYMA_08G107300"/>
</dbReference>
<dbReference type="KEGG" id="gmx:547802"/>
<dbReference type="eggNOG" id="ENOG502QQ71">
    <property type="taxonomic scope" value="Eukaryota"/>
</dbReference>
<dbReference type="InParanoid" id="P35694"/>
<dbReference type="OMA" id="WKTQDLD"/>
<dbReference type="OrthoDB" id="4781at2759"/>
<dbReference type="Proteomes" id="UP000008827">
    <property type="component" value="Chromosome 8"/>
</dbReference>
<dbReference type="GO" id="GO:0048046">
    <property type="term" value="C:apoplast"/>
    <property type="evidence" value="ECO:0007669"/>
    <property type="project" value="UniProtKB-SubCell"/>
</dbReference>
<dbReference type="GO" id="GO:0004553">
    <property type="term" value="F:hydrolase activity, hydrolyzing O-glycosyl compounds"/>
    <property type="evidence" value="ECO:0007669"/>
    <property type="project" value="InterPro"/>
</dbReference>
<dbReference type="GO" id="GO:0030247">
    <property type="term" value="F:polysaccharide binding"/>
    <property type="evidence" value="ECO:0000250"/>
    <property type="project" value="UniProtKB"/>
</dbReference>
<dbReference type="GO" id="GO:0016762">
    <property type="term" value="F:xyloglucan:xyloglucosyl transferase activity"/>
    <property type="evidence" value="ECO:0007669"/>
    <property type="project" value="UniProtKB-EC"/>
</dbReference>
<dbReference type="GO" id="GO:0042546">
    <property type="term" value="P:cell wall biogenesis"/>
    <property type="evidence" value="ECO:0007669"/>
    <property type="project" value="InterPro"/>
</dbReference>
<dbReference type="GO" id="GO:0010411">
    <property type="term" value="P:xyloglucan metabolic process"/>
    <property type="evidence" value="ECO:0007669"/>
    <property type="project" value="InterPro"/>
</dbReference>
<dbReference type="CDD" id="cd02176">
    <property type="entry name" value="GH16_XET"/>
    <property type="match status" value="1"/>
</dbReference>
<dbReference type="FunFam" id="2.60.120.200:FF:000025">
    <property type="entry name" value="Xyloglucan endotransglucosylase/hydrolase"/>
    <property type="match status" value="1"/>
</dbReference>
<dbReference type="Gene3D" id="2.60.120.200">
    <property type="match status" value="1"/>
</dbReference>
<dbReference type="InterPro" id="IPR044791">
    <property type="entry name" value="Beta-glucanase/XTH"/>
</dbReference>
<dbReference type="InterPro" id="IPR008264">
    <property type="entry name" value="Beta_glucanase"/>
</dbReference>
<dbReference type="InterPro" id="IPR013320">
    <property type="entry name" value="ConA-like_dom_sf"/>
</dbReference>
<dbReference type="InterPro" id="IPR000757">
    <property type="entry name" value="GH16"/>
</dbReference>
<dbReference type="InterPro" id="IPR008263">
    <property type="entry name" value="GH16_AS"/>
</dbReference>
<dbReference type="InterPro" id="IPR010713">
    <property type="entry name" value="XET_C"/>
</dbReference>
<dbReference type="InterPro" id="IPR016455">
    <property type="entry name" value="XTH"/>
</dbReference>
<dbReference type="PANTHER" id="PTHR31062">
    <property type="entry name" value="XYLOGLUCAN ENDOTRANSGLUCOSYLASE/HYDROLASE PROTEIN 8-RELATED"/>
    <property type="match status" value="1"/>
</dbReference>
<dbReference type="Pfam" id="PF00722">
    <property type="entry name" value="Glyco_hydro_16"/>
    <property type="match status" value="1"/>
</dbReference>
<dbReference type="Pfam" id="PF06955">
    <property type="entry name" value="XET_C"/>
    <property type="match status" value="1"/>
</dbReference>
<dbReference type="PIRSF" id="PIRSF005604">
    <property type="entry name" value="XET"/>
    <property type="match status" value="1"/>
</dbReference>
<dbReference type="PRINTS" id="PR00737">
    <property type="entry name" value="GLHYDRLASE16"/>
</dbReference>
<dbReference type="SUPFAM" id="SSF49899">
    <property type="entry name" value="Concanavalin A-like lectins/glucanases"/>
    <property type="match status" value="1"/>
</dbReference>
<dbReference type="PROSITE" id="PS01034">
    <property type="entry name" value="GH16_1"/>
    <property type="match status" value="1"/>
</dbReference>
<dbReference type="PROSITE" id="PS51762">
    <property type="entry name" value="GH16_2"/>
    <property type="match status" value="1"/>
</dbReference>
<comment type="function">
    <text evidence="1">Catalyzes xyloglucan endohydrolysis (XEH) and/or endotransglycosylation (XET). Cleaves and religates xyloglucan polymers, an essential constituent of the primary cell wall, and thereby participates in cell wall construction of growing tissues.</text>
</comment>
<comment type="catalytic activity">
    <reaction evidence="1">
        <text>breaks a beta-(1-&gt;4) bond in the backbone of a xyloglucan and transfers the xyloglucanyl segment on to O-4 of the non-reducing terminal glucose residue of an acceptor, which can be a xyloglucan or an oligosaccharide of xyloglucan.</text>
        <dbReference type="EC" id="2.4.1.207"/>
    </reaction>
</comment>
<comment type="subcellular location">
    <subcellularLocation>
        <location evidence="10">Secreted</location>
        <location evidence="10">Cell wall</location>
    </subcellularLocation>
    <subcellularLocation>
        <location evidence="10">Secreted</location>
        <location evidence="10">Extracellular space</location>
        <location evidence="10">Apoplast</location>
    </subcellularLocation>
</comment>
<comment type="developmental stage">
    <text evidence="8">Expressed at highest levels in epicotyls and hypocotyls of 14-day seedlings. Detected at low levels in stem apices and root tips of 14-day seedlings, and in 2-day etiolated seedlings. Not detected in 75-day plants.</text>
</comment>
<comment type="induction">
    <text evidence="8">Up-regulated by brassinosteroids, at a post-transcriptional level.</text>
</comment>
<comment type="PTM">
    <text evidence="1">Contains at least one intrachain disulfide bond essential for its enzymatic activity.</text>
</comment>
<comment type="PTM">
    <text evidence="3">N-glycosylated; not essential for its enzymatic activity.</text>
</comment>
<comment type="similarity">
    <text evidence="10">Belongs to the glycosyl hydrolase 16 family.</text>
</comment>
<reference key="1">
    <citation type="journal article" date="1994" name="Plant Physiol.">
        <title>Molecular cloning and characterization of a brassinosteroid-regulated gene from elongating soybean (Glycine max L.) epicotyls.</title>
        <authorList>
            <person name="Zurek D.M."/>
            <person name="Clouse S.D."/>
        </authorList>
    </citation>
    <scope>NUCLEOTIDE SEQUENCE [MRNA]</scope>
    <scope>DEVELOPMENTAL STAGE</scope>
    <scope>INDUCTION BY BRASSINOSTEROIDS</scope>
    <source>
        <tissue>Epicotyl</tissue>
    </source>
</reference>
<reference key="2">
    <citation type="submission" date="2009-08" db="EMBL/GenBank/DDBJ databases">
        <authorList>
            <person name="Cheung F."/>
            <person name="Xiao Y."/>
            <person name="Chan A."/>
            <person name="Moskal W."/>
            <person name="Town C.D."/>
        </authorList>
    </citation>
    <scope>NUCLEOTIDE SEQUENCE [MRNA]</scope>
</reference>
<protein>
    <recommendedName>
        <fullName evidence="1">Xyloglucan endotransglucosylase/hydrolase 2</fullName>
        <ecNumber evidence="1">2.4.1.207</ecNumber>
    </recommendedName>
    <alternativeName>
        <fullName evidence="9">Brassinosteroid-regulated protein BRU1</fullName>
    </alternativeName>
</protein>
<name>XTH2_SOYBN</name>
<accession>P35694</accession>
<accession>C6TH31</accession>
<proteinExistence type="evidence at transcript level"/>
<organism>
    <name type="scientific">Glycine max</name>
    <name type="common">Soybean</name>
    <name type="synonym">Glycine hispida</name>
    <dbReference type="NCBI Taxonomy" id="3847"/>
    <lineage>
        <taxon>Eukaryota</taxon>
        <taxon>Viridiplantae</taxon>
        <taxon>Streptophyta</taxon>
        <taxon>Embryophyta</taxon>
        <taxon>Tracheophyta</taxon>
        <taxon>Spermatophyta</taxon>
        <taxon>Magnoliopsida</taxon>
        <taxon>eudicotyledons</taxon>
        <taxon>Gunneridae</taxon>
        <taxon>Pentapetalae</taxon>
        <taxon>rosids</taxon>
        <taxon>fabids</taxon>
        <taxon>Fabales</taxon>
        <taxon>Fabaceae</taxon>
        <taxon>Papilionoideae</taxon>
        <taxon>50 kb inversion clade</taxon>
        <taxon>NPAAA clade</taxon>
        <taxon>indigoferoid/millettioid clade</taxon>
        <taxon>Phaseoleae</taxon>
        <taxon>Glycine</taxon>
        <taxon>Glycine subgen. Soja</taxon>
    </lineage>
</organism>
<sequence>MAPSSAHNNGFYVLMLVGIVVSTMVATCAGSFYQDFDLTWGGDRAKIFNGGQLLSLSLDKVSGSGFKSKKEYLFGRIDMQLKLVAGNSAGTVTAYYLSSQGPTHDEIDFEFLGNLSGDPYILHTNIFTQGKGNREQQFYLWFDPTRNFHTYSIIWKPQHIIFLVDNTPIRVFKNAEPLGVPFPKNQPMRIYSSLWNADDWATRGGLVKTDWSKAPFTAYYRNFKAIEFSSKSSISNSGAEYEANELDAYSRRRLRWVQKYFMIYNYCSDLKRFPQGLPAECKR</sequence>